<sequence>MKQSSSIIILVSGGMDSAALLWLAKKEFDKVYAVSFDYGQKHRVELDFAKKLTEEAGVEEHFIAEVPHLKGIKGSALTDRSVEIPSEEYPEGPPVTTVPMRNLNFLSIAASFADIYEIENIGIGVHSVDSPYPDCRAEFVSAAEAAINASSVMVAKKKNRITVYTPFLGMTKTDVLRIGLELGVPYEKTYSCYRGTIPPCGECATCRQRIEAFRSVGLEDPWFKKER</sequence>
<keyword id="KW-0067">ATP-binding</keyword>
<keyword id="KW-0436">Ligase</keyword>
<keyword id="KW-0479">Metal-binding</keyword>
<keyword id="KW-0547">Nucleotide-binding</keyword>
<keyword id="KW-0671">Queuosine biosynthesis</keyword>
<keyword id="KW-1185">Reference proteome</keyword>
<keyword id="KW-0862">Zinc</keyword>
<accession>C0QST3</accession>
<evidence type="ECO:0000255" key="1">
    <source>
        <dbReference type="HAMAP-Rule" id="MF_01633"/>
    </source>
</evidence>
<organism>
    <name type="scientific">Persephonella marina (strain DSM 14350 / EX-H1)</name>
    <dbReference type="NCBI Taxonomy" id="123214"/>
    <lineage>
        <taxon>Bacteria</taxon>
        <taxon>Pseudomonadati</taxon>
        <taxon>Aquificota</taxon>
        <taxon>Aquificia</taxon>
        <taxon>Aquificales</taxon>
        <taxon>Hydrogenothermaceae</taxon>
        <taxon>Persephonella</taxon>
    </lineage>
</organism>
<protein>
    <recommendedName>
        <fullName evidence="1">7-cyano-7-deazaguanine synthase</fullName>
        <ecNumber evidence="1">6.3.4.20</ecNumber>
    </recommendedName>
    <alternativeName>
        <fullName evidence="1">7-cyano-7-carbaguanine synthase</fullName>
    </alternativeName>
    <alternativeName>
        <fullName evidence="1">PreQ(0) synthase</fullName>
    </alternativeName>
    <alternativeName>
        <fullName evidence="1">Queuosine biosynthesis protein QueC</fullName>
    </alternativeName>
</protein>
<dbReference type="EC" id="6.3.4.20" evidence="1"/>
<dbReference type="EMBL" id="CP001230">
    <property type="protein sequence ID" value="ACO03566.1"/>
    <property type="molecule type" value="Genomic_DNA"/>
</dbReference>
<dbReference type="RefSeq" id="WP_012675805.1">
    <property type="nucleotide sequence ID" value="NC_012440.1"/>
</dbReference>
<dbReference type="SMR" id="C0QST3"/>
<dbReference type="STRING" id="123214.PERMA_1976"/>
<dbReference type="PaxDb" id="123214-PERMA_1976"/>
<dbReference type="KEGG" id="pmx:PERMA_1976"/>
<dbReference type="eggNOG" id="COG0603">
    <property type="taxonomic scope" value="Bacteria"/>
</dbReference>
<dbReference type="HOGENOM" id="CLU_081854_1_0_0"/>
<dbReference type="OrthoDB" id="9789567at2"/>
<dbReference type="UniPathway" id="UPA00391"/>
<dbReference type="Proteomes" id="UP000001366">
    <property type="component" value="Chromosome"/>
</dbReference>
<dbReference type="GO" id="GO:0005524">
    <property type="term" value="F:ATP binding"/>
    <property type="evidence" value="ECO:0007669"/>
    <property type="project" value="UniProtKB-UniRule"/>
</dbReference>
<dbReference type="GO" id="GO:0016879">
    <property type="term" value="F:ligase activity, forming carbon-nitrogen bonds"/>
    <property type="evidence" value="ECO:0007669"/>
    <property type="project" value="UniProtKB-UniRule"/>
</dbReference>
<dbReference type="GO" id="GO:0008270">
    <property type="term" value="F:zinc ion binding"/>
    <property type="evidence" value="ECO:0007669"/>
    <property type="project" value="UniProtKB-UniRule"/>
</dbReference>
<dbReference type="GO" id="GO:0008616">
    <property type="term" value="P:queuosine biosynthetic process"/>
    <property type="evidence" value="ECO:0007669"/>
    <property type="project" value="UniProtKB-UniRule"/>
</dbReference>
<dbReference type="CDD" id="cd01995">
    <property type="entry name" value="QueC-like"/>
    <property type="match status" value="1"/>
</dbReference>
<dbReference type="Gene3D" id="3.40.50.620">
    <property type="entry name" value="HUPs"/>
    <property type="match status" value="1"/>
</dbReference>
<dbReference type="HAMAP" id="MF_01633">
    <property type="entry name" value="QueC"/>
    <property type="match status" value="1"/>
</dbReference>
<dbReference type="InterPro" id="IPR018317">
    <property type="entry name" value="QueC"/>
</dbReference>
<dbReference type="InterPro" id="IPR014729">
    <property type="entry name" value="Rossmann-like_a/b/a_fold"/>
</dbReference>
<dbReference type="NCBIfam" id="TIGR00364">
    <property type="entry name" value="7-cyano-7-deazaguanine synthase QueC"/>
    <property type="match status" value="1"/>
</dbReference>
<dbReference type="PANTHER" id="PTHR42914">
    <property type="entry name" value="7-CYANO-7-DEAZAGUANINE SYNTHASE"/>
    <property type="match status" value="1"/>
</dbReference>
<dbReference type="PANTHER" id="PTHR42914:SF1">
    <property type="entry name" value="7-CYANO-7-DEAZAGUANINE SYNTHASE"/>
    <property type="match status" value="1"/>
</dbReference>
<dbReference type="Pfam" id="PF06508">
    <property type="entry name" value="QueC"/>
    <property type="match status" value="1"/>
</dbReference>
<dbReference type="PIRSF" id="PIRSF006293">
    <property type="entry name" value="ExsB"/>
    <property type="match status" value="1"/>
</dbReference>
<dbReference type="SUPFAM" id="SSF52402">
    <property type="entry name" value="Adenine nucleotide alpha hydrolases-like"/>
    <property type="match status" value="1"/>
</dbReference>
<name>QUEC_PERMH</name>
<feature type="chain" id="PRO_1000186617" description="7-cyano-7-deazaguanine synthase">
    <location>
        <begin position="1"/>
        <end position="227"/>
    </location>
</feature>
<feature type="binding site" evidence="1">
    <location>
        <begin position="11"/>
        <end position="21"/>
    </location>
    <ligand>
        <name>ATP</name>
        <dbReference type="ChEBI" id="CHEBI:30616"/>
    </ligand>
</feature>
<feature type="binding site" evidence="1">
    <location>
        <position position="192"/>
    </location>
    <ligand>
        <name>Zn(2+)</name>
        <dbReference type="ChEBI" id="CHEBI:29105"/>
    </ligand>
</feature>
<feature type="binding site" evidence="1">
    <location>
        <position position="200"/>
    </location>
    <ligand>
        <name>Zn(2+)</name>
        <dbReference type="ChEBI" id="CHEBI:29105"/>
    </ligand>
</feature>
<feature type="binding site" evidence="1">
    <location>
        <position position="203"/>
    </location>
    <ligand>
        <name>Zn(2+)</name>
        <dbReference type="ChEBI" id="CHEBI:29105"/>
    </ligand>
</feature>
<feature type="binding site" evidence="1">
    <location>
        <position position="206"/>
    </location>
    <ligand>
        <name>Zn(2+)</name>
        <dbReference type="ChEBI" id="CHEBI:29105"/>
    </ligand>
</feature>
<proteinExistence type="inferred from homology"/>
<gene>
    <name evidence="1" type="primary">queC</name>
    <name type="ordered locus">PERMA_1976</name>
</gene>
<reference key="1">
    <citation type="journal article" date="2009" name="J. Bacteriol.">
        <title>Complete and draft genome sequences of six members of the Aquificales.</title>
        <authorList>
            <person name="Reysenbach A.-L."/>
            <person name="Hamamura N."/>
            <person name="Podar M."/>
            <person name="Griffiths E."/>
            <person name="Ferreira S."/>
            <person name="Hochstein R."/>
            <person name="Heidelberg J."/>
            <person name="Johnson J."/>
            <person name="Mead D."/>
            <person name="Pohorille A."/>
            <person name="Sarmiento M."/>
            <person name="Schweighofer K."/>
            <person name="Seshadri R."/>
            <person name="Voytek M.A."/>
        </authorList>
    </citation>
    <scope>NUCLEOTIDE SEQUENCE [LARGE SCALE GENOMIC DNA]</scope>
    <source>
        <strain>DSM 14350 / EX-H1</strain>
    </source>
</reference>
<comment type="function">
    <text evidence="1">Catalyzes the ATP-dependent conversion of 7-carboxy-7-deazaguanine (CDG) to 7-cyano-7-deazaguanine (preQ(0)).</text>
</comment>
<comment type="catalytic activity">
    <reaction evidence="1">
        <text>7-carboxy-7-deazaguanine + NH4(+) + ATP = 7-cyano-7-deazaguanine + ADP + phosphate + H2O + H(+)</text>
        <dbReference type="Rhea" id="RHEA:27982"/>
        <dbReference type="ChEBI" id="CHEBI:15377"/>
        <dbReference type="ChEBI" id="CHEBI:15378"/>
        <dbReference type="ChEBI" id="CHEBI:28938"/>
        <dbReference type="ChEBI" id="CHEBI:30616"/>
        <dbReference type="ChEBI" id="CHEBI:43474"/>
        <dbReference type="ChEBI" id="CHEBI:45075"/>
        <dbReference type="ChEBI" id="CHEBI:61036"/>
        <dbReference type="ChEBI" id="CHEBI:456216"/>
        <dbReference type="EC" id="6.3.4.20"/>
    </reaction>
</comment>
<comment type="cofactor">
    <cofactor evidence="1">
        <name>Zn(2+)</name>
        <dbReference type="ChEBI" id="CHEBI:29105"/>
    </cofactor>
    <text evidence="1">Binds 1 zinc ion per subunit.</text>
</comment>
<comment type="pathway">
    <text evidence="1">Purine metabolism; 7-cyano-7-deazaguanine biosynthesis.</text>
</comment>
<comment type="similarity">
    <text evidence="1">Belongs to the QueC family.</text>
</comment>